<organism>
    <name type="scientific">Histophilus somni (strain 129Pt)</name>
    <name type="common">Haemophilus somnus</name>
    <dbReference type="NCBI Taxonomy" id="205914"/>
    <lineage>
        <taxon>Bacteria</taxon>
        <taxon>Pseudomonadati</taxon>
        <taxon>Pseudomonadota</taxon>
        <taxon>Gammaproteobacteria</taxon>
        <taxon>Pasteurellales</taxon>
        <taxon>Pasteurellaceae</taxon>
        <taxon>Histophilus</taxon>
    </lineage>
</organism>
<keyword id="KW-0456">Lyase</keyword>
<keyword id="KW-0663">Pyridoxal phosphate</keyword>
<keyword id="KW-0823">Tryptophan catabolism</keyword>
<proteinExistence type="inferred from homology"/>
<dbReference type="EC" id="4.1.99.1" evidence="1"/>
<dbReference type="EMBL" id="CP000436">
    <property type="protein sequence ID" value="ABI25076.1"/>
    <property type="molecule type" value="Genomic_DNA"/>
</dbReference>
<dbReference type="SMR" id="Q0I3R5"/>
<dbReference type="KEGG" id="hso:HS_0801"/>
<dbReference type="eggNOG" id="COG3033">
    <property type="taxonomic scope" value="Bacteria"/>
</dbReference>
<dbReference type="HOGENOM" id="CLU_047223_0_0_6"/>
<dbReference type="UniPathway" id="UPA00332">
    <property type="reaction ID" value="UER00452"/>
</dbReference>
<dbReference type="GO" id="GO:0009034">
    <property type="term" value="F:tryptophanase activity"/>
    <property type="evidence" value="ECO:0007669"/>
    <property type="project" value="UniProtKB-UniRule"/>
</dbReference>
<dbReference type="FunFam" id="3.40.640.10:FF:000039">
    <property type="entry name" value="Tryptophanase"/>
    <property type="match status" value="1"/>
</dbReference>
<dbReference type="Gene3D" id="3.90.1150.10">
    <property type="entry name" value="Aspartate Aminotransferase, domain 1"/>
    <property type="match status" value="1"/>
</dbReference>
<dbReference type="Gene3D" id="3.40.640.10">
    <property type="entry name" value="Type I PLP-dependent aspartate aminotransferase-like (Major domain)"/>
    <property type="match status" value="1"/>
</dbReference>
<dbReference type="HAMAP" id="MF_00544">
    <property type="entry name" value="Tryptophanase"/>
    <property type="match status" value="1"/>
</dbReference>
<dbReference type="InterPro" id="IPR001597">
    <property type="entry name" value="ArAA_b-elim_lyase/Thr_aldolase"/>
</dbReference>
<dbReference type="InterPro" id="IPR011166">
    <property type="entry name" value="Beta-eliminating_lyase"/>
</dbReference>
<dbReference type="InterPro" id="IPR015424">
    <property type="entry name" value="PyrdxlP-dep_Trfase"/>
</dbReference>
<dbReference type="InterPro" id="IPR015421">
    <property type="entry name" value="PyrdxlP-dep_Trfase_major"/>
</dbReference>
<dbReference type="InterPro" id="IPR015422">
    <property type="entry name" value="PyrdxlP-dep_Trfase_small"/>
</dbReference>
<dbReference type="InterPro" id="IPR013440">
    <property type="entry name" value="TNase"/>
</dbReference>
<dbReference type="InterPro" id="IPR018176">
    <property type="entry name" value="Tryptophanase_CS"/>
</dbReference>
<dbReference type="NCBIfam" id="NF009709">
    <property type="entry name" value="PRK13238.1"/>
    <property type="match status" value="1"/>
</dbReference>
<dbReference type="NCBIfam" id="TIGR02617">
    <property type="entry name" value="tnaA_trp_ase"/>
    <property type="match status" value="1"/>
</dbReference>
<dbReference type="PANTHER" id="PTHR32325">
    <property type="entry name" value="BETA-ELIMINATING LYASE-LIKE PROTEIN-RELATED"/>
    <property type="match status" value="1"/>
</dbReference>
<dbReference type="PANTHER" id="PTHR32325:SF4">
    <property type="entry name" value="TRYPTOPHANASE"/>
    <property type="match status" value="1"/>
</dbReference>
<dbReference type="Pfam" id="PF01212">
    <property type="entry name" value="Beta_elim_lyase"/>
    <property type="match status" value="1"/>
</dbReference>
<dbReference type="PIRSF" id="PIRSF001386">
    <property type="entry name" value="Trpase"/>
    <property type="match status" value="1"/>
</dbReference>
<dbReference type="SUPFAM" id="SSF53383">
    <property type="entry name" value="PLP-dependent transferases"/>
    <property type="match status" value="1"/>
</dbReference>
<dbReference type="PROSITE" id="PS00853">
    <property type="entry name" value="BETA_ELIM_LYASE"/>
    <property type="match status" value="1"/>
</dbReference>
<name>TNAA_HISS1</name>
<protein>
    <recommendedName>
        <fullName evidence="1">Tryptophanase</fullName>
        <ecNumber evidence="1">4.1.99.1</ecNumber>
    </recommendedName>
    <alternativeName>
        <fullName evidence="1">L-tryptophan indole-lyase</fullName>
        <shortName evidence="1">TNase</shortName>
    </alternativeName>
</protein>
<evidence type="ECO:0000255" key="1">
    <source>
        <dbReference type="HAMAP-Rule" id="MF_00544"/>
    </source>
</evidence>
<comment type="catalytic activity">
    <reaction evidence="1">
        <text>L-tryptophan + H2O = indole + pyruvate + NH4(+)</text>
        <dbReference type="Rhea" id="RHEA:19553"/>
        <dbReference type="ChEBI" id="CHEBI:15361"/>
        <dbReference type="ChEBI" id="CHEBI:15377"/>
        <dbReference type="ChEBI" id="CHEBI:16881"/>
        <dbReference type="ChEBI" id="CHEBI:28938"/>
        <dbReference type="ChEBI" id="CHEBI:57912"/>
        <dbReference type="EC" id="4.1.99.1"/>
    </reaction>
</comment>
<comment type="cofactor">
    <cofactor evidence="1">
        <name>pyridoxal 5'-phosphate</name>
        <dbReference type="ChEBI" id="CHEBI:597326"/>
    </cofactor>
</comment>
<comment type="pathway">
    <text evidence="1">Amino-acid degradation; L-tryptophan degradation via pyruvate pathway; indole and pyruvate from L-tryptophan: step 1/1.</text>
</comment>
<comment type="subunit">
    <text evidence="1">Homotetramer.</text>
</comment>
<comment type="similarity">
    <text evidence="1">Belongs to the beta-eliminating lyase family.</text>
</comment>
<reference key="1">
    <citation type="journal article" date="2007" name="J. Bacteriol.">
        <title>Complete genome sequence of Haemophilus somnus (Histophilus somni) strain 129Pt and comparison to Haemophilus ducreyi 35000HP and Haemophilus influenzae Rd.</title>
        <authorList>
            <person name="Challacombe J.F."/>
            <person name="Duncan A.J."/>
            <person name="Brettin T.S."/>
            <person name="Bruce D."/>
            <person name="Chertkov O."/>
            <person name="Detter J.C."/>
            <person name="Han C.S."/>
            <person name="Misra M."/>
            <person name="Richardson P."/>
            <person name="Tapia R."/>
            <person name="Thayer N."/>
            <person name="Xie G."/>
            <person name="Inzana T.J."/>
        </authorList>
    </citation>
    <scope>NUCLEOTIDE SEQUENCE [LARGE SCALE GENOMIC DNA]</scope>
    <source>
        <strain>129Pt</strain>
    </source>
</reference>
<sequence length="471" mass="53107">MENFKHLPEPFRIRVIEPVKRTTRAYRDEAILKAGMNLFLLDSEDIFIDLLTDSGTGAVTQDMQAAMLRGDEAYSGSRSYYALANAVKEIFGYEYTIPTHQGRGAEQIYIPVLIKKREQEKGLDRNKMVVFSNYFFDTTQGHSQLNGATVRNVYIKEAFDTDVDHDFKGNFDLEKLEQGILEVGANNVPYIVCTITCNSAGGQPVSLANMKAMYQIARKYDIPVIMDSARFAENAYFIQQREAEYKDWTIEQITYESYKYADALAMSAKKDAMVPMGGLLCFKDNSMEDVYNECRTLCVVQEGFPTYGGLEGGAMERLAVGLRDGMRQDWLAYRISQIEYLVQGLEKIGVVCQQPGGHAAFVDAGKLLPHIPAEQFPAQALACELYKVAGIRSVEIGSLLLGRDPKTGQQLPCPAELLRLTIPRATYTQTHMDFIIEAFKRVKENAKNIKGLDFTYEPKVLRHFTARLKEI</sequence>
<gene>
    <name evidence="1" type="primary">tnaA</name>
    <name type="ordered locus">HS_0801</name>
</gene>
<feature type="chain" id="PRO_1000017732" description="Tryptophanase">
    <location>
        <begin position="1"/>
        <end position="471"/>
    </location>
</feature>
<feature type="modified residue" description="N6-(pyridoxal phosphate)lysine" evidence="1">
    <location>
        <position position="270"/>
    </location>
</feature>
<accession>Q0I3R5</accession>